<sequence>MSQKELWYETLHANFGQYFSVENVLFREKTEHQDLVIFENPELGRVMALDGVVQTTERDEFIYHEMMTHVPLLAHGQAKKVLIIGGGDGAMLREVSRHKNIEQITMVEIDAGVVEFCRQYLPNHSAGAYDDPRFKLVIDDGVNFVNQTTEKFDVIISDCTDPIGPGESLFTSVFYEGCARSLNEGGIFVAQNGVCFLQQDEAVNSHNKLSHYFSDVSFYQAAIPTYYGGIMTFAWATQNPALRQLDLATLQNRFAQAGLACRYYNPAIHVGSFALPQYLLDALTTIPKVIGVDSSE</sequence>
<dbReference type="EC" id="2.5.1.16" evidence="1"/>
<dbReference type="EMBL" id="AL590842">
    <property type="protein sequence ID" value="CAL22000.1"/>
    <property type="molecule type" value="Genomic_DNA"/>
</dbReference>
<dbReference type="EMBL" id="AE009952">
    <property type="protein sequence ID" value="AAM84362.1"/>
    <property type="status" value="ALT_INIT"/>
    <property type="molecule type" value="Genomic_DNA"/>
</dbReference>
<dbReference type="EMBL" id="AE017042">
    <property type="protein sequence ID" value="AAS60550.1"/>
    <property type="status" value="ALT_INIT"/>
    <property type="molecule type" value="Genomic_DNA"/>
</dbReference>
<dbReference type="PIR" id="AE0414">
    <property type="entry name" value="AE0414"/>
</dbReference>
<dbReference type="RefSeq" id="WP_002209338.1">
    <property type="nucleotide sequence ID" value="NZ_WUCM01000008.1"/>
</dbReference>
<dbReference type="RefSeq" id="YP_002348303.1">
    <property type="nucleotide sequence ID" value="NC_003143.1"/>
</dbReference>
<dbReference type="SMR" id="Q8ZBJ8"/>
<dbReference type="STRING" id="214092.YPO3411"/>
<dbReference type="PaxDb" id="214092-YPO3411"/>
<dbReference type="EnsemblBacteria" id="AAS60550">
    <property type="protein sequence ID" value="AAS60550"/>
    <property type="gene ID" value="YP_0274"/>
</dbReference>
<dbReference type="GeneID" id="57975298"/>
<dbReference type="KEGG" id="ype:YPO3411"/>
<dbReference type="KEGG" id="ypk:y0775"/>
<dbReference type="KEGG" id="ypm:YP_0274"/>
<dbReference type="PATRIC" id="fig|214092.21.peg.3897"/>
<dbReference type="eggNOG" id="COG0421">
    <property type="taxonomic scope" value="Bacteria"/>
</dbReference>
<dbReference type="HOGENOM" id="CLU_048199_0_0_6"/>
<dbReference type="OMA" id="FLYHEMM"/>
<dbReference type="OrthoDB" id="9793120at2"/>
<dbReference type="UniPathway" id="UPA00248">
    <property type="reaction ID" value="UER00314"/>
</dbReference>
<dbReference type="Proteomes" id="UP000000815">
    <property type="component" value="Chromosome"/>
</dbReference>
<dbReference type="Proteomes" id="UP000001019">
    <property type="component" value="Chromosome"/>
</dbReference>
<dbReference type="Proteomes" id="UP000002490">
    <property type="component" value="Chromosome"/>
</dbReference>
<dbReference type="GO" id="GO:0005829">
    <property type="term" value="C:cytosol"/>
    <property type="evidence" value="ECO:0000318"/>
    <property type="project" value="GO_Central"/>
</dbReference>
<dbReference type="GO" id="GO:0004766">
    <property type="term" value="F:spermidine synthase activity"/>
    <property type="evidence" value="ECO:0000318"/>
    <property type="project" value="GO_Central"/>
</dbReference>
<dbReference type="GO" id="GO:0008295">
    <property type="term" value="P:spermidine biosynthetic process"/>
    <property type="evidence" value="ECO:0000318"/>
    <property type="project" value="GO_Central"/>
</dbReference>
<dbReference type="CDD" id="cd02440">
    <property type="entry name" value="AdoMet_MTases"/>
    <property type="match status" value="1"/>
</dbReference>
<dbReference type="FunFam" id="2.30.140.10:FF:000002">
    <property type="entry name" value="Polyamine aminopropyltransferase"/>
    <property type="match status" value="1"/>
</dbReference>
<dbReference type="FunFam" id="3.40.50.150:FF:000026">
    <property type="entry name" value="Polyamine aminopropyltransferase"/>
    <property type="match status" value="1"/>
</dbReference>
<dbReference type="Gene3D" id="2.30.140.10">
    <property type="entry name" value="Spermidine synthase, tetramerisation domain"/>
    <property type="match status" value="1"/>
</dbReference>
<dbReference type="Gene3D" id="3.40.50.150">
    <property type="entry name" value="Vaccinia Virus protein VP39"/>
    <property type="match status" value="1"/>
</dbReference>
<dbReference type="HAMAP" id="MF_00198">
    <property type="entry name" value="Spermidine_synth"/>
    <property type="match status" value="1"/>
</dbReference>
<dbReference type="InterPro" id="IPR030374">
    <property type="entry name" value="PABS"/>
</dbReference>
<dbReference type="InterPro" id="IPR030373">
    <property type="entry name" value="PABS_CS"/>
</dbReference>
<dbReference type="InterPro" id="IPR029063">
    <property type="entry name" value="SAM-dependent_MTases_sf"/>
</dbReference>
<dbReference type="InterPro" id="IPR001045">
    <property type="entry name" value="Spermi_synthase"/>
</dbReference>
<dbReference type="InterPro" id="IPR035246">
    <property type="entry name" value="Spermidine_synt_N"/>
</dbReference>
<dbReference type="InterPro" id="IPR037163">
    <property type="entry name" value="Spermidine_synt_N_sf"/>
</dbReference>
<dbReference type="NCBIfam" id="NF037959">
    <property type="entry name" value="MFS_SpdSyn"/>
    <property type="match status" value="1"/>
</dbReference>
<dbReference type="NCBIfam" id="NF002010">
    <property type="entry name" value="PRK00811.1"/>
    <property type="match status" value="1"/>
</dbReference>
<dbReference type="NCBIfam" id="TIGR00417">
    <property type="entry name" value="speE"/>
    <property type="match status" value="1"/>
</dbReference>
<dbReference type="PANTHER" id="PTHR11558:SF11">
    <property type="entry name" value="SPERMIDINE SYNTHASE"/>
    <property type="match status" value="1"/>
</dbReference>
<dbReference type="PANTHER" id="PTHR11558">
    <property type="entry name" value="SPERMIDINE/SPERMINE SYNTHASE"/>
    <property type="match status" value="1"/>
</dbReference>
<dbReference type="Pfam" id="PF17284">
    <property type="entry name" value="Spermine_synt_N"/>
    <property type="match status" value="1"/>
</dbReference>
<dbReference type="Pfam" id="PF01564">
    <property type="entry name" value="Spermine_synth"/>
    <property type="match status" value="1"/>
</dbReference>
<dbReference type="SUPFAM" id="SSF53335">
    <property type="entry name" value="S-adenosyl-L-methionine-dependent methyltransferases"/>
    <property type="match status" value="1"/>
</dbReference>
<dbReference type="PROSITE" id="PS01330">
    <property type="entry name" value="PABS_1"/>
    <property type="match status" value="1"/>
</dbReference>
<dbReference type="PROSITE" id="PS51006">
    <property type="entry name" value="PABS_2"/>
    <property type="match status" value="1"/>
</dbReference>
<name>SPEE_YERPE</name>
<keyword id="KW-0963">Cytoplasm</keyword>
<keyword id="KW-0620">Polyamine biosynthesis</keyword>
<keyword id="KW-1185">Reference proteome</keyword>
<keyword id="KW-0745">Spermidine biosynthesis</keyword>
<keyword id="KW-0808">Transferase</keyword>
<protein>
    <recommendedName>
        <fullName evidence="1">Polyamine aminopropyltransferase</fullName>
    </recommendedName>
    <alternativeName>
        <fullName evidence="1">Putrescine aminopropyltransferase</fullName>
        <shortName evidence="1">PAPT</shortName>
    </alternativeName>
    <alternativeName>
        <fullName evidence="1">Spermidine synthase</fullName>
        <shortName evidence="1">SPDS</shortName>
        <shortName evidence="1">SPDSY</shortName>
        <ecNumber evidence="1">2.5.1.16</ecNumber>
    </alternativeName>
</protein>
<accession>Q8ZBJ8</accession>
<accession>Q0WBN5</accession>
<organism>
    <name type="scientific">Yersinia pestis</name>
    <dbReference type="NCBI Taxonomy" id="632"/>
    <lineage>
        <taxon>Bacteria</taxon>
        <taxon>Pseudomonadati</taxon>
        <taxon>Pseudomonadota</taxon>
        <taxon>Gammaproteobacteria</taxon>
        <taxon>Enterobacterales</taxon>
        <taxon>Yersiniaceae</taxon>
        <taxon>Yersinia</taxon>
    </lineage>
</organism>
<proteinExistence type="inferred from homology"/>
<evidence type="ECO:0000255" key="1">
    <source>
        <dbReference type="HAMAP-Rule" id="MF_00198"/>
    </source>
</evidence>
<evidence type="ECO:0000305" key="2"/>
<gene>
    <name evidence="1" type="primary">speE</name>
    <name type="ordered locus">YPO3411</name>
    <name type="ordered locus">y0775</name>
    <name type="ordered locus">YP_0274</name>
</gene>
<reference key="1">
    <citation type="journal article" date="2001" name="Nature">
        <title>Genome sequence of Yersinia pestis, the causative agent of plague.</title>
        <authorList>
            <person name="Parkhill J."/>
            <person name="Wren B.W."/>
            <person name="Thomson N.R."/>
            <person name="Titball R.W."/>
            <person name="Holden M.T.G."/>
            <person name="Prentice M.B."/>
            <person name="Sebaihia M."/>
            <person name="James K.D."/>
            <person name="Churcher C.M."/>
            <person name="Mungall K.L."/>
            <person name="Baker S."/>
            <person name="Basham D."/>
            <person name="Bentley S.D."/>
            <person name="Brooks K."/>
            <person name="Cerdeno-Tarraga A.-M."/>
            <person name="Chillingworth T."/>
            <person name="Cronin A."/>
            <person name="Davies R.M."/>
            <person name="Davis P."/>
            <person name="Dougan G."/>
            <person name="Feltwell T."/>
            <person name="Hamlin N."/>
            <person name="Holroyd S."/>
            <person name="Jagels K."/>
            <person name="Karlyshev A.V."/>
            <person name="Leather S."/>
            <person name="Moule S."/>
            <person name="Oyston P.C.F."/>
            <person name="Quail M.A."/>
            <person name="Rutherford K.M."/>
            <person name="Simmonds M."/>
            <person name="Skelton J."/>
            <person name="Stevens K."/>
            <person name="Whitehead S."/>
            <person name="Barrell B.G."/>
        </authorList>
    </citation>
    <scope>NUCLEOTIDE SEQUENCE [LARGE SCALE GENOMIC DNA]</scope>
    <source>
        <strain>CO-92 / Biovar Orientalis</strain>
    </source>
</reference>
<reference key="2">
    <citation type="journal article" date="2002" name="J. Bacteriol.">
        <title>Genome sequence of Yersinia pestis KIM.</title>
        <authorList>
            <person name="Deng W."/>
            <person name="Burland V."/>
            <person name="Plunkett G. III"/>
            <person name="Boutin A."/>
            <person name="Mayhew G.F."/>
            <person name="Liss P."/>
            <person name="Perna N.T."/>
            <person name="Rose D.J."/>
            <person name="Mau B."/>
            <person name="Zhou S."/>
            <person name="Schwartz D.C."/>
            <person name="Fetherston J.D."/>
            <person name="Lindler L.E."/>
            <person name="Brubaker R.R."/>
            <person name="Plano G.V."/>
            <person name="Straley S.C."/>
            <person name="McDonough K.A."/>
            <person name="Nilles M.L."/>
            <person name="Matson J.S."/>
            <person name="Blattner F.R."/>
            <person name="Perry R.D."/>
        </authorList>
    </citation>
    <scope>NUCLEOTIDE SEQUENCE [LARGE SCALE GENOMIC DNA]</scope>
    <source>
        <strain>KIM10+ / Biovar Mediaevalis</strain>
    </source>
</reference>
<reference key="3">
    <citation type="journal article" date="2004" name="DNA Res.">
        <title>Complete genome sequence of Yersinia pestis strain 91001, an isolate avirulent to humans.</title>
        <authorList>
            <person name="Song Y."/>
            <person name="Tong Z."/>
            <person name="Wang J."/>
            <person name="Wang L."/>
            <person name="Guo Z."/>
            <person name="Han Y."/>
            <person name="Zhang J."/>
            <person name="Pei D."/>
            <person name="Zhou D."/>
            <person name="Qin H."/>
            <person name="Pang X."/>
            <person name="Han Y."/>
            <person name="Zhai J."/>
            <person name="Li M."/>
            <person name="Cui B."/>
            <person name="Qi Z."/>
            <person name="Jin L."/>
            <person name="Dai R."/>
            <person name="Chen F."/>
            <person name="Li S."/>
            <person name="Ye C."/>
            <person name="Du Z."/>
            <person name="Lin W."/>
            <person name="Wang J."/>
            <person name="Yu J."/>
            <person name="Yang H."/>
            <person name="Wang J."/>
            <person name="Huang P."/>
            <person name="Yang R."/>
        </authorList>
    </citation>
    <scope>NUCLEOTIDE SEQUENCE [LARGE SCALE GENOMIC DNA]</scope>
    <source>
        <strain>91001 / Biovar Mediaevalis</strain>
    </source>
</reference>
<feature type="chain" id="PRO_0000156523" description="Polyamine aminopropyltransferase">
    <location>
        <begin position="1"/>
        <end position="296"/>
    </location>
</feature>
<feature type="domain" description="PABS" evidence="1">
    <location>
        <begin position="5"/>
        <end position="238"/>
    </location>
</feature>
<feature type="active site" description="Proton acceptor" evidence="1">
    <location>
        <position position="158"/>
    </location>
</feature>
<feature type="binding site" evidence="1">
    <location>
        <position position="33"/>
    </location>
    <ligand>
        <name>S-methyl-5'-thioadenosine</name>
        <dbReference type="ChEBI" id="CHEBI:17509"/>
    </ligand>
</feature>
<feature type="binding site" evidence="1">
    <location>
        <position position="64"/>
    </location>
    <ligand>
        <name>spermidine</name>
        <dbReference type="ChEBI" id="CHEBI:57834"/>
    </ligand>
</feature>
<feature type="binding site" evidence="1">
    <location>
        <position position="88"/>
    </location>
    <ligand>
        <name>spermidine</name>
        <dbReference type="ChEBI" id="CHEBI:57834"/>
    </ligand>
</feature>
<feature type="binding site" evidence="1">
    <location>
        <position position="108"/>
    </location>
    <ligand>
        <name>S-methyl-5'-thioadenosine</name>
        <dbReference type="ChEBI" id="CHEBI:17509"/>
    </ligand>
</feature>
<feature type="binding site" evidence="1">
    <location>
        <begin position="140"/>
        <end position="141"/>
    </location>
    <ligand>
        <name>S-methyl-5'-thioadenosine</name>
        <dbReference type="ChEBI" id="CHEBI:17509"/>
    </ligand>
</feature>
<feature type="binding site" evidence="1">
    <location>
        <begin position="158"/>
        <end position="161"/>
    </location>
    <ligand>
        <name>spermidine</name>
        <dbReference type="ChEBI" id="CHEBI:57834"/>
    </ligand>
</feature>
<feature type="binding site" evidence="1">
    <location>
        <position position="165"/>
    </location>
    <ligand>
        <name>S-methyl-5'-thioadenosine</name>
        <dbReference type="ChEBI" id="CHEBI:17509"/>
    </ligand>
</feature>
<comment type="function">
    <text evidence="1">Catalyzes the irreversible transfer of a propylamine group from the amino donor S-adenosylmethioninamine (decarboxy-AdoMet) to putrescine (1,4-diaminobutane) to yield spermidine.</text>
</comment>
<comment type="catalytic activity">
    <reaction evidence="1">
        <text>S-adenosyl 3-(methylsulfanyl)propylamine + putrescine = S-methyl-5'-thioadenosine + spermidine + H(+)</text>
        <dbReference type="Rhea" id="RHEA:12721"/>
        <dbReference type="ChEBI" id="CHEBI:15378"/>
        <dbReference type="ChEBI" id="CHEBI:17509"/>
        <dbReference type="ChEBI" id="CHEBI:57443"/>
        <dbReference type="ChEBI" id="CHEBI:57834"/>
        <dbReference type="ChEBI" id="CHEBI:326268"/>
        <dbReference type="EC" id="2.5.1.16"/>
    </reaction>
</comment>
<comment type="pathway">
    <text evidence="1">Amine and polyamine biosynthesis; spermidine biosynthesis; spermidine from putrescine: step 1/1.</text>
</comment>
<comment type="subunit">
    <text evidence="1">Homodimer or homotetramer.</text>
</comment>
<comment type="subcellular location">
    <subcellularLocation>
        <location evidence="1">Cytoplasm</location>
    </subcellularLocation>
</comment>
<comment type="similarity">
    <text evidence="1">Belongs to the spermidine/spermine synthase family.</text>
</comment>
<comment type="sequence caution" evidence="2">
    <conflict type="erroneous initiation">
        <sequence resource="EMBL-CDS" id="AAM84362"/>
    </conflict>
    <text>Extended N-terminus.</text>
</comment>
<comment type="sequence caution" evidence="2">
    <conflict type="erroneous initiation">
        <sequence resource="EMBL-CDS" id="AAS60550"/>
    </conflict>
    <text>Extended N-terminus.</text>
</comment>